<organism>
    <name type="scientific">Shigella flexneri</name>
    <dbReference type="NCBI Taxonomy" id="623"/>
    <lineage>
        <taxon>Bacteria</taxon>
        <taxon>Pseudomonadati</taxon>
        <taxon>Pseudomonadota</taxon>
        <taxon>Gammaproteobacteria</taxon>
        <taxon>Enterobacterales</taxon>
        <taxon>Enterobacteriaceae</taxon>
        <taxon>Shigella</taxon>
    </lineage>
</organism>
<keyword id="KW-0998">Cell outer membrane</keyword>
<keyword id="KW-0472">Membrane</keyword>
<keyword id="KW-1185">Reference proteome</keyword>
<keyword id="KW-0677">Repeat</keyword>
<keyword id="KW-0732">Signal</keyword>
<keyword id="KW-0812">Transmembrane</keyword>
<keyword id="KW-1134">Transmembrane beta strand</keyword>
<dbReference type="EMBL" id="AF120927">
    <property type="protein sequence ID" value="AAD23568.1"/>
    <property type="molecule type" value="Genomic_DNA"/>
</dbReference>
<dbReference type="EMBL" id="AE005674">
    <property type="protein sequence ID" value="AAN41829.1"/>
    <property type="molecule type" value="Genomic_DNA"/>
</dbReference>
<dbReference type="EMBL" id="AE014073">
    <property type="protein sequence ID" value="AAP15710.1"/>
    <property type="molecule type" value="Genomic_DNA"/>
</dbReference>
<dbReference type="RefSeq" id="NP_706122.1">
    <property type="nucleotide sequence ID" value="NC_004337.2"/>
</dbReference>
<dbReference type="RefSeq" id="WP_001240896.1">
    <property type="nucleotide sequence ID" value="NZ_WPGW01000006.1"/>
</dbReference>
<dbReference type="SMR" id="P0A943"/>
<dbReference type="STRING" id="198214.SF0167"/>
<dbReference type="TCDB" id="1.B.33.1.3">
    <property type="family name" value="the outer membrane protein insertion porin (bam complex) (ompip) family"/>
</dbReference>
<dbReference type="PaxDb" id="198214-SF0167"/>
<dbReference type="GeneID" id="1024444"/>
<dbReference type="GeneID" id="93777248"/>
<dbReference type="KEGG" id="sfl:SF0167"/>
<dbReference type="KEGG" id="sfx:S0170"/>
<dbReference type="PATRIC" id="fig|198214.7.peg.189"/>
<dbReference type="HOGENOM" id="CLU_007664_1_0_6"/>
<dbReference type="Proteomes" id="UP000001006">
    <property type="component" value="Chromosome"/>
</dbReference>
<dbReference type="Proteomes" id="UP000002673">
    <property type="component" value="Chromosome"/>
</dbReference>
<dbReference type="GO" id="GO:1990063">
    <property type="term" value="C:Bam protein complex"/>
    <property type="evidence" value="ECO:0007669"/>
    <property type="project" value="TreeGrafter"/>
</dbReference>
<dbReference type="GO" id="GO:0043165">
    <property type="term" value="P:Gram-negative-bacterium-type cell outer membrane assembly"/>
    <property type="evidence" value="ECO:0007669"/>
    <property type="project" value="UniProtKB-UniRule"/>
</dbReference>
<dbReference type="GO" id="GO:0051205">
    <property type="term" value="P:protein insertion into membrane"/>
    <property type="evidence" value="ECO:0007669"/>
    <property type="project" value="UniProtKB-UniRule"/>
</dbReference>
<dbReference type="FunFam" id="2.40.160.50:FF:000001">
    <property type="entry name" value="Outer membrane protein assembly factor BamA"/>
    <property type="match status" value="1"/>
</dbReference>
<dbReference type="FunFam" id="3.10.20.310:FF:000001">
    <property type="entry name" value="Outer membrane protein assembly factor BamA"/>
    <property type="match status" value="1"/>
</dbReference>
<dbReference type="FunFam" id="3.10.20.310:FF:000002">
    <property type="entry name" value="Outer membrane protein assembly factor BamA"/>
    <property type="match status" value="1"/>
</dbReference>
<dbReference type="FunFam" id="3.10.20.310:FF:000003">
    <property type="entry name" value="Outer membrane protein assembly factor BamA"/>
    <property type="match status" value="1"/>
</dbReference>
<dbReference type="FunFam" id="3.10.20.310:FF:000004">
    <property type="entry name" value="Outer membrane protein assembly factor BamA"/>
    <property type="match status" value="1"/>
</dbReference>
<dbReference type="FunFam" id="3.10.20.310:FF:000005">
    <property type="entry name" value="Outer membrane protein assembly factor BamA"/>
    <property type="match status" value="1"/>
</dbReference>
<dbReference type="Gene3D" id="3.10.20.310">
    <property type="entry name" value="membrane protein fhac"/>
    <property type="match status" value="5"/>
</dbReference>
<dbReference type="Gene3D" id="2.40.160.50">
    <property type="entry name" value="membrane protein fhac: a member of the omp85/tpsb transporter family"/>
    <property type="match status" value="1"/>
</dbReference>
<dbReference type="HAMAP" id="MF_01430">
    <property type="entry name" value="OM_assembly_BamA"/>
    <property type="match status" value="1"/>
</dbReference>
<dbReference type="InterPro" id="IPR000184">
    <property type="entry name" value="Bac_surfAg_D15"/>
</dbReference>
<dbReference type="InterPro" id="IPR010827">
    <property type="entry name" value="BamA/TamA_POTRA"/>
</dbReference>
<dbReference type="InterPro" id="IPR039910">
    <property type="entry name" value="D15-like"/>
</dbReference>
<dbReference type="InterPro" id="IPR023707">
    <property type="entry name" value="OM_assembly_BamA"/>
</dbReference>
<dbReference type="InterPro" id="IPR034746">
    <property type="entry name" value="POTRA"/>
</dbReference>
<dbReference type="NCBIfam" id="TIGR03303">
    <property type="entry name" value="OM_YaeT"/>
    <property type="match status" value="1"/>
</dbReference>
<dbReference type="NCBIfam" id="NF008287">
    <property type="entry name" value="PRK11067.1"/>
    <property type="match status" value="1"/>
</dbReference>
<dbReference type="PANTHER" id="PTHR12815:SF23">
    <property type="entry name" value="OUTER MEMBRANE PROTEIN ASSEMBLY FACTOR BAMA"/>
    <property type="match status" value="1"/>
</dbReference>
<dbReference type="PANTHER" id="PTHR12815">
    <property type="entry name" value="SORTING AND ASSEMBLY MACHINERY SAMM50 PROTEIN FAMILY MEMBER"/>
    <property type="match status" value="1"/>
</dbReference>
<dbReference type="Pfam" id="PF01103">
    <property type="entry name" value="Omp85"/>
    <property type="match status" value="1"/>
</dbReference>
<dbReference type="Pfam" id="PF07244">
    <property type="entry name" value="POTRA"/>
    <property type="match status" value="4"/>
</dbReference>
<dbReference type="PIRSF" id="PIRSF006076">
    <property type="entry name" value="OM_assembly_OMP85"/>
    <property type="match status" value="1"/>
</dbReference>
<dbReference type="PROSITE" id="PS51779">
    <property type="entry name" value="POTRA"/>
    <property type="match status" value="5"/>
</dbReference>
<protein>
    <recommendedName>
        <fullName evidence="1">Outer membrane protein assembly factor BamA</fullName>
    </recommendedName>
</protein>
<feature type="signal peptide" evidence="1">
    <location>
        <begin position="1"/>
        <end position="20"/>
    </location>
</feature>
<feature type="chain" id="PRO_0000033473" description="Outer membrane protein assembly factor BamA">
    <location>
        <begin position="21"/>
        <end position="810"/>
    </location>
</feature>
<feature type="domain" description="POTRA 1" evidence="2">
    <location>
        <begin position="24"/>
        <end position="91"/>
    </location>
</feature>
<feature type="domain" description="POTRA 2" evidence="2">
    <location>
        <begin position="92"/>
        <end position="172"/>
    </location>
</feature>
<feature type="domain" description="POTRA 3" evidence="2">
    <location>
        <begin position="175"/>
        <end position="263"/>
    </location>
</feature>
<feature type="domain" description="POTRA 4" evidence="2">
    <location>
        <begin position="266"/>
        <end position="344"/>
    </location>
</feature>
<feature type="domain" description="POTRA 5" evidence="2">
    <location>
        <begin position="347"/>
        <end position="421"/>
    </location>
</feature>
<name>BAMA_SHIFL</name>
<accession>P0A943</accession>
<accession>P39170</accession>
<accession>P39181</accession>
<accession>P77465</accession>
<accession>Q549H3</accession>
<gene>
    <name evidence="1" type="primary">bamA</name>
    <name type="synonym">oma90</name>
    <name type="synonym">yaeT</name>
    <name type="ordered locus">SF0167</name>
    <name type="ordered locus">S0170</name>
</gene>
<comment type="function">
    <text evidence="1">Part of the outer membrane protein assembly complex, which is involved in assembly and insertion of beta-barrel proteins into the outer membrane. Constitutes, with BamD, the core component of the assembly machinery.</text>
</comment>
<comment type="subunit">
    <text evidence="1">Part of the Bam complex, which is composed of the outer membrane protein BamA, and four lipoproteins BamB, BamC, BamD and BamE.</text>
</comment>
<comment type="subcellular location">
    <subcellularLocation>
        <location evidence="1">Cell outer membrane</location>
    </subcellularLocation>
</comment>
<comment type="induction">
    <text evidence="3">Up-regulated during intraperitoneal growth.</text>
</comment>
<comment type="similarity">
    <text evidence="1">Belongs to the BamA family.</text>
</comment>
<sequence length="810" mass="90553">MAMKKLLIASLLFSSATVYGAEGFVVKDIHFEGLQRVAVGAALLSMPVRTGDTVNDEDISNTIRALFATGNFEDVRVLRDGDTLLVQVKERPTIASITFSGNKSVKDDMLKQNLEASGVRVGESLDRTTIADIEKGLEDFYYSVGKYSASVKAVVTPLPRNRVDLKLVFQEGVSAEIQQINIVGNHAFTTDELISHFQLRDEVPWWNVVGDRKYQKQKLAGDLETLRSYYLDRGYARFNIDSTQVSLTPDKKGIYVTVNITEGDQYKLSGVEVSGNLAGHSAEIEQLTKIEPGELYNGTKVTKMEDDIKKLLGRYGYAYPRVQSMPEINDADKTVKLRVNVDAGNRFYVRKIRFEGNDTSKDAVLRREMRQMEGAWLGSDLVDQGKERLNRLGFFETVDTDTQRVPGSPDQVDVVYKVKERNTGSFNFGIGYGTESGVSFQAGVQQDNWLGTGYAVGINGTKNDYQTYAELSVTNPYFTVDGVSLGGRLFYNDFQADDADLSDYTNKSYGTDVTLGFPINEYNSLRAGLGYVHNSLSNMQPQVAMWRYLYSMGEHPSTSDQDNSFKTDDFTFNYGWTYNKLDRGYFPTDGSRVNLTGKVTIPGSDNEYYKVTLDTATYVPIDDDHKWVVLGRTRWGYGDGLGGKEMPFYENFYAGGSSTVRGFQSNTIGPKAVYFPHQASNYDPDYDYECATQDGAKDLCKSDDAVGGNAMAVASLEFITPTPFISDKYANSVRTSFFWDMGTVWDTNWDSSQYSGYPDYSDPSNIRMSAGIALQWMSPLGPLVFSYAQPFKKYDGDKAEQFQFNIGKTW</sequence>
<proteinExistence type="evidence at transcript level"/>
<reference key="1">
    <citation type="journal article" date="2001" name="Gene">
        <title>Identification and characterization of an in vivo regulated D15/Oma87 homologue in Shigella flexneri using differential display polymerase chain reaction.</title>
        <authorList>
            <person name="Robb C.W."/>
            <person name="Orihuela C.J."/>
            <person name="Ekkelenkamp M.B."/>
            <person name="Niesel D.W."/>
        </authorList>
    </citation>
    <scope>NUCLEOTIDE SEQUENCE [GENOMIC DNA]</scope>
    <scope>INDUCTION</scope>
    <source>
        <strain>M90T / Serotype 5a</strain>
    </source>
</reference>
<reference key="2">
    <citation type="journal article" date="2002" name="Nucleic Acids Res.">
        <title>Genome sequence of Shigella flexneri 2a: insights into pathogenicity through comparison with genomes of Escherichia coli K12 and O157.</title>
        <authorList>
            <person name="Jin Q."/>
            <person name="Yuan Z."/>
            <person name="Xu J."/>
            <person name="Wang Y."/>
            <person name="Shen Y."/>
            <person name="Lu W."/>
            <person name="Wang J."/>
            <person name="Liu H."/>
            <person name="Yang J."/>
            <person name="Yang F."/>
            <person name="Zhang X."/>
            <person name="Zhang J."/>
            <person name="Yang G."/>
            <person name="Wu H."/>
            <person name="Qu D."/>
            <person name="Dong J."/>
            <person name="Sun L."/>
            <person name="Xue Y."/>
            <person name="Zhao A."/>
            <person name="Gao Y."/>
            <person name="Zhu J."/>
            <person name="Kan B."/>
            <person name="Ding K."/>
            <person name="Chen S."/>
            <person name="Cheng H."/>
            <person name="Yao Z."/>
            <person name="He B."/>
            <person name="Chen R."/>
            <person name="Ma D."/>
            <person name="Qiang B."/>
            <person name="Wen Y."/>
            <person name="Hou Y."/>
            <person name="Yu J."/>
        </authorList>
    </citation>
    <scope>NUCLEOTIDE SEQUENCE [LARGE SCALE GENOMIC DNA]</scope>
    <source>
        <strain>301 / Serotype 2a</strain>
    </source>
</reference>
<reference key="3">
    <citation type="journal article" date="2003" name="Infect. Immun.">
        <title>Complete genome sequence and comparative genomics of Shigella flexneri serotype 2a strain 2457T.</title>
        <authorList>
            <person name="Wei J."/>
            <person name="Goldberg M.B."/>
            <person name="Burland V."/>
            <person name="Venkatesan M.M."/>
            <person name="Deng W."/>
            <person name="Fournier G."/>
            <person name="Mayhew G.F."/>
            <person name="Plunkett G. III"/>
            <person name="Rose D.J."/>
            <person name="Darling A."/>
            <person name="Mau B."/>
            <person name="Perna N.T."/>
            <person name="Payne S.M."/>
            <person name="Runyen-Janecky L.J."/>
            <person name="Zhou S."/>
            <person name="Schwartz D.C."/>
            <person name="Blattner F.R."/>
        </authorList>
    </citation>
    <scope>NUCLEOTIDE SEQUENCE [LARGE SCALE GENOMIC DNA]</scope>
    <source>
        <strain>ATCC 700930 / 2457T / Serotype 2a</strain>
    </source>
</reference>
<evidence type="ECO:0000255" key="1">
    <source>
        <dbReference type="HAMAP-Rule" id="MF_01430"/>
    </source>
</evidence>
<evidence type="ECO:0000255" key="2">
    <source>
        <dbReference type="PROSITE-ProRule" id="PRU01115"/>
    </source>
</evidence>
<evidence type="ECO:0000269" key="3">
    <source>
    </source>
</evidence>